<dbReference type="EC" id="7.4.2.8" evidence="1"/>
<dbReference type="EMBL" id="CP000248">
    <property type="protein sequence ID" value="ABD26430.1"/>
    <property type="molecule type" value="Genomic_DNA"/>
</dbReference>
<dbReference type="RefSeq" id="WP_011445639.1">
    <property type="nucleotide sequence ID" value="NC_007794.1"/>
</dbReference>
<dbReference type="SMR" id="Q2G6U3"/>
<dbReference type="STRING" id="279238.Saro_1990"/>
<dbReference type="KEGG" id="nar:Saro_1990"/>
<dbReference type="eggNOG" id="COG0653">
    <property type="taxonomic scope" value="Bacteria"/>
</dbReference>
<dbReference type="HOGENOM" id="CLU_005314_3_0_5"/>
<dbReference type="Proteomes" id="UP000009134">
    <property type="component" value="Chromosome"/>
</dbReference>
<dbReference type="GO" id="GO:0031522">
    <property type="term" value="C:cell envelope Sec protein transport complex"/>
    <property type="evidence" value="ECO:0007669"/>
    <property type="project" value="TreeGrafter"/>
</dbReference>
<dbReference type="GO" id="GO:0005829">
    <property type="term" value="C:cytosol"/>
    <property type="evidence" value="ECO:0007669"/>
    <property type="project" value="TreeGrafter"/>
</dbReference>
<dbReference type="GO" id="GO:0005886">
    <property type="term" value="C:plasma membrane"/>
    <property type="evidence" value="ECO:0007669"/>
    <property type="project" value="UniProtKB-SubCell"/>
</dbReference>
<dbReference type="GO" id="GO:0005524">
    <property type="term" value="F:ATP binding"/>
    <property type="evidence" value="ECO:0007669"/>
    <property type="project" value="UniProtKB-UniRule"/>
</dbReference>
<dbReference type="GO" id="GO:0046872">
    <property type="term" value="F:metal ion binding"/>
    <property type="evidence" value="ECO:0007669"/>
    <property type="project" value="UniProtKB-KW"/>
</dbReference>
<dbReference type="GO" id="GO:0008564">
    <property type="term" value="F:protein-exporting ATPase activity"/>
    <property type="evidence" value="ECO:0007669"/>
    <property type="project" value="UniProtKB-EC"/>
</dbReference>
<dbReference type="GO" id="GO:0065002">
    <property type="term" value="P:intracellular protein transmembrane transport"/>
    <property type="evidence" value="ECO:0007669"/>
    <property type="project" value="UniProtKB-UniRule"/>
</dbReference>
<dbReference type="GO" id="GO:0017038">
    <property type="term" value="P:protein import"/>
    <property type="evidence" value="ECO:0007669"/>
    <property type="project" value="InterPro"/>
</dbReference>
<dbReference type="GO" id="GO:0006605">
    <property type="term" value="P:protein targeting"/>
    <property type="evidence" value="ECO:0007669"/>
    <property type="project" value="UniProtKB-UniRule"/>
</dbReference>
<dbReference type="GO" id="GO:0043952">
    <property type="term" value="P:protein transport by the Sec complex"/>
    <property type="evidence" value="ECO:0007669"/>
    <property type="project" value="TreeGrafter"/>
</dbReference>
<dbReference type="CDD" id="cd17928">
    <property type="entry name" value="DEXDc_SecA"/>
    <property type="match status" value="1"/>
</dbReference>
<dbReference type="CDD" id="cd18803">
    <property type="entry name" value="SF2_C_secA"/>
    <property type="match status" value="1"/>
</dbReference>
<dbReference type="FunFam" id="3.40.50.300:FF:000113">
    <property type="entry name" value="Preprotein translocase subunit SecA"/>
    <property type="match status" value="1"/>
</dbReference>
<dbReference type="FunFam" id="3.90.1440.10:FF:000001">
    <property type="entry name" value="Preprotein translocase subunit SecA"/>
    <property type="match status" value="1"/>
</dbReference>
<dbReference type="FunFam" id="1.10.3060.10:FF:000003">
    <property type="entry name" value="Protein translocase subunit SecA"/>
    <property type="match status" value="1"/>
</dbReference>
<dbReference type="FunFam" id="3.40.50.300:FF:000334">
    <property type="entry name" value="Protein translocase subunit SecA"/>
    <property type="match status" value="1"/>
</dbReference>
<dbReference type="Gene3D" id="3.10.450.50">
    <property type="match status" value="1"/>
</dbReference>
<dbReference type="Gene3D" id="1.10.3060.10">
    <property type="entry name" value="Helical scaffold and wing domains of SecA"/>
    <property type="match status" value="1"/>
</dbReference>
<dbReference type="Gene3D" id="3.40.50.300">
    <property type="entry name" value="P-loop containing nucleotide triphosphate hydrolases"/>
    <property type="match status" value="2"/>
</dbReference>
<dbReference type="Gene3D" id="3.90.1440.10">
    <property type="entry name" value="SecA, preprotein cross-linking domain"/>
    <property type="match status" value="1"/>
</dbReference>
<dbReference type="HAMAP" id="MF_01382">
    <property type="entry name" value="SecA"/>
    <property type="match status" value="1"/>
</dbReference>
<dbReference type="InterPro" id="IPR014001">
    <property type="entry name" value="Helicase_ATP-bd"/>
</dbReference>
<dbReference type="InterPro" id="IPR001650">
    <property type="entry name" value="Helicase_C-like"/>
</dbReference>
<dbReference type="InterPro" id="IPR027417">
    <property type="entry name" value="P-loop_NTPase"/>
</dbReference>
<dbReference type="InterPro" id="IPR004027">
    <property type="entry name" value="SEC_C_motif"/>
</dbReference>
<dbReference type="InterPro" id="IPR000185">
    <property type="entry name" value="SecA"/>
</dbReference>
<dbReference type="InterPro" id="IPR020937">
    <property type="entry name" value="SecA_CS"/>
</dbReference>
<dbReference type="InterPro" id="IPR011115">
    <property type="entry name" value="SecA_DEAD"/>
</dbReference>
<dbReference type="InterPro" id="IPR014018">
    <property type="entry name" value="SecA_motor_DEAD"/>
</dbReference>
<dbReference type="InterPro" id="IPR011130">
    <property type="entry name" value="SecA_preprotein_X-link_dom"/>
</dbReference>
<dbReference type="InterPro" id="IPR044722">
    <property type="entry name" value="SecA_SF2_C"/>
</dbReference>
<dbReference type="InterPro" id="IPR011116">
    <property type="entry name" value="SecA_Wing/Scaffold"/>
</dbReference>
<dbReference type="InterPro" id="IPR036266">
    <property type="entry name" value="SecA_Wing/Scaffold_sf"/>
</dbReference>
<dbReference type="InterPro" id="IPR036670">
    <property type="entry name" value="SecA_X-link_sf"/>
</dbReference>
<dbReference type="NCBIfam" id="NF009538">
    <property type="entry name" value="PRK12904.1"/>
    <property type="match status" value="1"/>
</dbReference>
<dbReference type="NCBIfam" id="TIGR00963">
    <property type="entry name" value="secA"/>
    <property type="match status" value="1"/>
</dbReference>
<dbReference type="PANTHER" id="PTHR30612:SF0">
    <property type="entry name" value="CHLOROPLAST PROTEIN-TRANSPORTING ATPASE"/>
    <property type="match status" value="1"/>
</dbReference>
<dbReference type="PANTHER" id="PTHR30612">
    <property type="entry name" value="SECA INNER MEMBRANE COMPONENT OF SEC PROTEIN SECRETION SYSTEM"/>
    <property type="match status" value="1"/>
</dbReference>
<dbReference type="Pfam" id="PF21090">
    <property type="entry name" value="P-loop_SecA"/>
    <property type="match status" value="1"/>
</dbReference>
<dbReference type="Pfam" id="PF02810">
    <property type="entry name" value="SEC-C"/>
    <property type="match status" value="1"/>
</dbReference>
<dbReference type="Pfam" id="PF07517">
    <property type="entry name" value="SecA_DEAD"/>
    <property type="match status" value="1"/>
</dbReference>
<dbReference type="Pfam" id="PF01043">
    <property type="entry name" value="SecA_PP_bind"/>
    <property type="match status" value="1"/>
</dbReference>
<dbReference type="Pfam" id="PF07516">
    <property type="entry name" value="SecA_SW"/>
    <property type="match status" value="1"/>
</dbReference>
<dbReference type="PRINTS" id="PR00906">
    <property type="entry name" value="SECA"/>
</dbReference>
<dbReference type="SMART" id="SM00957">
    <property type="entry name" value="SecA_DEAD"/>
    <property type="match status" value="1"/>
</dbReference>
<dbReference type="SMART" id="SM00958">
    <property type="entry name" value="SecA_PP_bind"/>
    <property type="match status" value="1"/>
</dbReference>
<dbReference type="SUPFAM" id="SSF81886">
    <property type="entry name" value="Helical scaffold and wing domains of SecA"/>
    <property type="match status" value="1"/>
</dbReference>
<dbReference type="SUPFAM" id="SSF52540">
    <property type="entry name" value="P-loop containing nucleoside triphosphate hydrolases"/>
    <property type="match status" value="2"/>
</dbReference>
<dbReference type="SUPFAM" id="SSF81767">
    <property type="entry name" value="Pre-protein crosslinking domain of SecA"/>
    <property type="match status" value="1"/>
</dbReference>
<dbReference type="PROSITE" id="PS01312">
    <property type="entry name" value="SECA"/>
    <property type="match status" value="1"/>
</dbReference>
<dbReference type="PROSITE" id="PS51196">
    <property type="entry name" value="SECA_MOTOR_DEAD"/>
    <property type="match status" value="1"/>
</dbReference>
<sequence length="911" mass="101841">MFGSIAKALFGSSNDRYVKSLDKIVRQIAAFEPHVQALSDEELAAQTPKFRQMLAEGKTLDDILPEAFATVREASVRALGMRHFDVQMIGGIVLHRGEIAEMRTGEGKTLVATLAVYLNALEGKGVHVVTVNDYLARRDAETMGVLYNFLGLTVGVIVPNLNEEQRREAYNADITYATNNELGFDYLRDNMKHERGQMVHRPFNFAIVDEVDSILIDEARTPLIISGPTDDKSDLYISVDAVVKQIAPDLYEADEKTKNITLTEDGVEWVERAFEDAGLLVGSNLYDVENTMVVHHLDQALKANVMFKRDIDYIVKDGKIVIIDEFTGRMMDGRRWSNGLHQAVEAKEGVKIEPENQTMASITFQNYFRMYPKIAGMTGTAATEAPEFFDIYKMNVVSIPTNVPVQRIDEEDEFYKNTMDKFGAIAKLIRERYENGQPVLVGTVSIEKSELLSEFLQKEGVKHNVLNARFHEMEAHIVAQAGRLGAVTIATNMAGRGTDIQLGGNVEFRIEDELRDVPEGPEREAGIARIRAEVAEEKQKVLAAGGLCVIGTERHESRRIDNQLRGRSGRQGDPGMSKFYLCLEDDLLRIFGPDTLFARMMNSNLADGEAIGSKWLSKAIETAQKKVEARNYDIRKQVVEYDDVMNDQRKVIYEQRADIMDAEAVGDVVTDMRHDTVNAIVGDACPPGSYPEQWDVESLKARVRDVLGIEIPLDDWFQEEAIEPDTIEERIQQLADAHMDTKITEVDASAWRSLEKSILLERLDHHWKEHLATLDALRQVVFLRAYAQKTPINEYKQEAFGLFEKMLDAIREDVTRILMTSEIRLRPVEEFQLPELPDFLTSHIDPFTGENDAAPLAPAPSMFGALPPQAGGALSGGFPDGDPFAGQGISRNAPCPCGSGQKYKHCHGVAA</sequence>
<protein>
    <recommendedName>
        <fullName evidence="1">Protein translocase subunit SecA</fullName>
        <ecNumber evidence="1">7.4.2.8</ecNumber>
    </recommendedName>
</protein>
<name>SECA_NOVAD</name>
<comment type="function">
    <text evidence="1">Part of the Sec protein translocase complex. Interacts with the SecYEG preprotein conducting channel. Has a central role in coupling the hydrolysis of ATP to the transfer of proteins into and across the cell membrane, serving both as a receptor for the preprotein-SecB complex and as an ATP-driven molecular motor driving the stepwise translocation of polypeptide chains across the membrane.</text>
</comment>
<comment type="catalytic activity">
    <reaction evidence="1">
        <text>ATP + H2O + cellular proteinSide 1 = ADP + phosphate + cellular proteinSide 2.</text>
        <dbReference type="EC" id="7.4.2.8"/>
    </reaction>
</comment>
<comment type="cofactor">
    <cofactor evidence="1">
        <name>Zn(2+)</name>
        <dbReference type="ChEBI" id="CHEBI:29105"/>
    </cofactor>
    <text evidence="1">May bind 1 zinc ion per subunit.</text>
</comment>
<comment type="subunit">
    <text evidence="1">Monomer and homodimer. Part of the essential Sec protein translocation apparatus which comprises SecA, SecYEG and auxiliary proteins SecDF-YajC and YidC.</text>
</comment>
<comment type="subcellular location">
    <subcellularLocation>
        <location evidence="1">Cell inner membrane</location>
        <topology evidence="1">Peripheral membrane protein</topology>
        <orientation evidence="1">Cytoplasmic side</orientation>
    </subcellularLocation>
    <subcellularLocation>
        <location evidence="1">Cytoplasm</location>
    </subcellularLocation>
    <text evidence="1">Distribution is 50-50.</text>
</comment>
<comment type="similarity">
    <text evidence="1">Belongs to the SecA family.</text>
</comment>
<reference key="1">
    <citation type="submission" date="2006-01" db="EMBL/GenBank/DDBJ databases">
        <title>Complete sequence of Novosphingobium aromaticivorans DSM 12444.</title>
        <authorList>
            <consortium name="US DOE Joint Genome Institute"/>
            <person name="Copeland A."/>
            <person name="Lucas S."/>
            <person name="Lapidus A."/>
            <person name="Barry K."/>
            <person name="Detter J.C."/>
            <person name="Glavina T."/>
            <person name="Hammon N."/>
            <person name="Israni S."/>
            <person name="Pitluck S."/>
            <person name="Chain P."/>
            <person name="Malfatti S."/>
            <person name="Shin M."/>
            <person name="Vergez L."/>
            <person name="Schmutz J."/>
            <person name="Larimer F."/>
            <person name="Land M."/>
            <person name="Kyrpides N."/>
            <person name="Ivanova N."/>
            <person name="Fredrickson J."/>
            <person name="Balkwill D."/>
            <person name="Romine M.F."/>
            <person name="Richardson P."/>
        </authorList>
    </citation>
    <scope>NUCLEOTIDE SEQUENCE [LARGE SCALE GENOMIC DNA]</scope>
    <source>
        <strain>ATCC 700278 / DSM 12444 / CCUG 56034 / CIP 105152 / NBRC 16084 / F199</strain>
    </source>
</reference>
<keyword id="KW-0067">ATP-binding</keyword>
<keyword id="KW-0997">Cell inner membrane</keyword>
<keyword id="KW-1003">Cell membrane</keyword>
<keyword id="KW-0963">Cytoplasm</keyword>
<keyword id="KW-0472">Membrane</keyword>
<keyword id="KW-0479">Metal-binding</keyword>
<keyword id="KW-0547">Nucleotide-binding</keyword>
<keyword id="KW-0653">Protein transport</keyword>
<keyword id="KW-1185">Reference proteome</keyword>
<keyword id="KW-1278">Translocase</keyword>
<keyword id="KW-0811">Translocation</keyword>
<keyword id="KW-0813">Transport</keyword>
<keyword id="KW-0862">Zinc</keyword>
<evidence type="ECO:0000255" key="1">
    <source>
        <dbReference type="HAMAP-Rule" id="MF_01382"/>
    </source>
</evidence>
<gene>
    <name evidence="1" type="primary">secA</name>
    <name type="ordered locus">Saro_1990</name>
</gene>
<accession>Q2G6U3</accession>
<feature type="chain" id="PRO_0000320874" description="Protein translocase subunit SecA">
    <location>
        <begin position="1"/>
        <end position="911"/>
    </location>
</feature>
<feature type="binding site" evidence="1">
    <location>
        <position position="87"/>
    </location>
    <ligand>
        <name>ATP</name>
        <dbReference type="ChEBI" id="CHEBI:30616"/>
    </ligand>
</feature>
<feature type="binding site" evidence="1">
    <location>
        <begin position="105"/>
        <end position="109"/>
    </location>
    <ligand>
        <name>ATP</name>
        <dbReference type="ChEBI" id="CHEBI:30616"/>
    </ligand>
</feature>
<feature type="binding site" evidence="1">
    <location>
        <position position="499"/>
    </location>
    <ligand>
        <name>ATP</name>
        <dbReference type="ChEBI" id="CHEBI:30616"/>
    </ligand>
</feature>
<feature type="binding site" evidence="1">
    <location>
        <position position="895"/>
    </location>
    <ligand>
        <name>Zn(2+)</name>
        <dbReference type="ChEBI" id="CHEBI:29105"/>
    </ligand>
</feature>
<feature type="binding site" evidence="1">
    <location>
        <position position="897"/>
    </location>
    <ligand>
        <name>Zn(2+)</name>
        <dbReference type="ChEBI" id="CHEBI:29105"/>
    </ligand>
</feature>
<feature type="binding site" evidence="1">
    <location>
        <position position="906"/>
    </location>
    <ligand>
        <name>Zn(2+)</name>
        <dbReference type="ChEBI" id="CHEBI:29105"/>
    </ligand>
</feature>
<feature type="binding site" evidence="1">
    <location>
        <position position="907"/>
    </location>
    <ligand>
        <name>Zn(2+)</name>
        <dbReference type="ChEBI" id="CHEBI:29105"/>
    </ligand>
</feature>
<organism>
    <name type="scientific">Novosphingobium aromaticivorans (strain ATCC 700278 / DSM 12444 / CCUG 56034 / CIP 105152 / NBRC 16084 / F199)</name>
    <dbReference type="NCBI Taxonomy" id="279238"/>
    <lineage>
        <taxon>Bacteria</taxon>
        <taxon>Pseudomonadati</taxon>
        <taxon>Pseudomonadota</taxon>
        <taxon>Alphaproteobacteria</taxon>
        <taxon>Sphingomonadales</taxon>
        <taxon>Sphingomonadaceae</taxon>
        <taxon>Novosphingobium</taxon>
    </lineage>
</organism>
<proteinExistence type="inferred from homology"/>